<sequence>MKFTNLTAKEFGAFTDSMPYSHFTQTVGHYELKLAEGYETHLVGIKNNNNEVIAACLLTAVPVMKVFKYFYSNRGPVIDYENQELVHFFFNELSKYVKKHRCLYLHIDPYLPYQYLNHDGEITGNAGNDWFFDKMSNLGFEHTGFHKGFDPVLQIRYHSVLDLKDKTADDIIKNMDGLRKRNTKKVKKNGVKVRFLSEEELPIFRSFMEDTSESKAFADRDDKFYYNRLKYYKDRVLVPLAYINFDEYIKELNEERDILNKDLNKALKDIEKRPENKKAHNKRDNLQQQLDANEQKIEEGKRLQEEHGNELPISAGFFFINPFEVVYYAGGTSNAFRHFAGSYAVQWEMINYALNHGIDRYNFYGVSGKFTEDAEDAGVVKFKKGYNAEIIEYVGDFIKPINKPVYAAYTALKKVKDRIF</sequence>
<dbReference type="EC" id="2.3.2.17"/>
<dbReference type="EMBL" id="CP000253">
    <property type="protein sequence ID" value="ABD30468.1"/>
    <property type="molecule type" value="Genomic_DNA"/>
</dbReference>
<dbReference type="RefSeq" id="WP_000673309.1">
    <property type="nucleotide sequence ID" value="NZ_LS483365.1"/>
</dbReference>
<dbReference type="RefSeq" id="YP_499900.1">
    <property type="nucleotide sequence ID" value="NC_007795.1"/>
</dbReference>
<dbReference type="SMR" id="Q2FYR2"/>
<dbReference type="STRING" id="93061.SAOUHSC_01373"/>
<dbReference type="PaxDb" id="1280-SAXN108_1390"/>
<dbReference type="GeneID" id="3920782"/>
<dbReference type="KEGG" id="sao:SAOUHSC_01373"/>
<dbReference type="PATRIC" id="fig|93061.5.peg.1257"/>
<dbReference type="eggNOG" id="COG2348">
    <property type="taxonomic scope" value="Bacteria"/>
</dbReference>
<dbReference type="HOGENOM" id="CLU_048411_1_0_9"/>
<dbReference type="OrthoDB" id="2173585at2"/>
<dbReference type="PRO" id="PR:Q2FYR2"/>
<dbReference type="Proteomes" id="UP000008816">
    <property type="component" value="Chromosome"/>
</dbReference>
<dbReference type="GO" id="GO:0005737">
    <property type="term" value="C:cytoplasm"/>
    <property type="evidence" value="ECO:0007669"/>
    <property type="project" value="UniProtKB-SubCell"/>
</dbReference>
<dbReference type="GO" id="GO:0016755">
    <property type="term" value="F:aminoacyltransferase activity"/>
    <property type="evidence" value="ECO:0007669"/>
    <property type="project" value="InterPro"/>
</dbReference>
<dbReference type="GO" id="GO:0000166">
    <property type="term" value="F:nucleotide binding"/>
    <property type="evidence" value="ECO:0007669"/>
    <property type="project" value="InterPro"/>
</dbReference>
<dbReference type="GO" id="GO:0071555">
    <property type="term" value="P:cell wall organization"/>
    <property type="evidence" value="ECO:0007669"/>
    <property type="project" value="UniProtKB-KW"/>
</dbReference>
<dbReference type="GO" id="GO:0009252">
    <property type="term" value="P:peptidoglycan biosynthetic process"/>
    <property type="evidence" value="ECO:0007669"/>
    <property type="project" value="UniProtKB-KW"/>
</dbReference>
<dbReference type="GO" id="GO:0008360">
    <property type="term" value="P:regulation of cell shape"/>
    <property type="evidence" value="ECO:0007669"/>
    <property type="project" value="UniProtKB-KW"/>
</dbReference>
<dbReference type="GO" id="GO:0046677">
    <property type="term" value="P:response to antibiotic"/>
    <property type="evidence" value="ECO:0007669"/>
    <property type="project" value="UniProtKB-KW"/>
</dbReference>
<dbReference type="Gene3D" id="1.20.58.90">
    <property type="match status" value="1"/>
</dbReference>
<dbReference type="Gene3D" id="3.40.630.30">
    <property type="match status" value="2"/>
</dbReference>
<dbReference type="InterPro" id="IPR016181">
    <property type="entry name" value="Acyl_CoA_acyltransferase"/>
</dbReference>
<dbReference type="InterPro" id="IPR003447">
    <property type="entry name" value="FEMABX"/>
</dbReference>
<dbReference type="InterPro" id="IPR050644">
    <property type="entry name" value="PG_Glycine_Bridge_Synth"/>
</dbReference>
<dbReference type="InterPro" id="IPR010978">
    <property type="entry name" value="tRNA-bd_arm"/>
</dbReference>
<dbReference type="PANTHER" id="PTHR36174:SF2">
    <property type="entry name" value="AMINOACYLTRANSFERASE FEMA"/>
    <property type="match status" value="1"/>
</dbReference>
<dbReference type="PANTHER" id="PTHR36174">
    <property type="entry name" value="LIPID II:GLYCINE GLYCYLTRANSFERASE"/>
    <property type="match status" value="1"/>
</dbReference>
<dbReference type="Pfam" id="PF02388">
    <property type="entry name" value="FemAB"/>
    <property type="match status" value="1"/>
</dbReference>
<dbReference type="SUPFAM" id="SSF55729">
    <property type="entry name" value="Acyl-CoA N-acyltransferases (Nat)"/>
    <property type="match status" value="2"/>
</dbReference>
<dbReference type="SUPFAM" id="SSF46589">
    <property type="entry name" value="tRNA-binding arm"/>
    <property type="match status" value="1"/>
</dbReference>
<dbReference type="PROSITE" id="PS51191">
    <property type="entry name" value="FEMABX"/>
    <property type="match status" value="1"/>
</dbReference>
<reference key="1">
    <citation type="book" date="2006" name="Gram positive pathogens, 2nd edition">
        <title>The Staphylococcus aureus NCTC 8325 genome.</title>
        <editorList>
            <person name="Fischetti V."/>
            <person name="Novick R."/>
            <person name="Ferretti J."/>
            <person name="Portnoy D."/>
            <person name="Rood J."/>
        </editorList>
        <authorList>
            <person name="Gillaspy A.F."/>
            <person name="Worrell V."/>
            <person name="Orvis J."/>
            <person name="Roe B.A."/>
            <person name="Dyer D.W."/>
            <person name="Iandolo J.J."/>
        </authorList>
    </citation>
    <scope>NUCLEOTIDE SEQUENCE [LARGE SCALE GENOMIC DNA]</scope>
    <source>
        <strain>NCTC 8325 / PS 47</strain>
    </source>
</reference>
<reference key="2">
    <citation type="journal article" date="1997" name="J. Bacteriol.">
        <title>Specificities of FemA and FemB for different glycine residues: FemB cannot substitute for FemA in staphylococcal peptidoglycan pentaglycine side chain formation.</title>
        <authorList>
            <person name="Ehlert K."/>
            <person name="Schroeder W."/>
            <person name="Labischinski H."/>
        </authorList>
    </citation>
    <scope>PROTEIN SEQUENCE OF 1-15</scope>
    <scope>FUNCTION</scope>
</reference>
<reference key="3">
    <citation type="journal article" date="1995" name="FEMS Microbiol. Lett.">
        <title>FemA of Staphylococcus aureus: isolation and immunodetection.</title>
        <authorList>
            <person name="Johnson S."/>
            <person name="Krueger D."/>
            <person name="Labischinski H."/>
        </authorList>
    </citation>
    <scope>SUBCELLULAR LOCATION</scope>
</reference>
<reference key="4">
    <citation type="journal article" date="1997" name="J. Bacteriol.">
        <title>Cell wall monoglycine cross-bridges and methicillin hypersusceptibility in a femAB null mutant of methicillin-resistant Staphylococcus aureus.</title>
        <authorList>
            <person name="Stranden A.M."/>
            <person name="Ehlert K."/>
            <person name="Labischinski H."/>
            <person name="Berger-Baechi B."/>
        </authorList>
    </citation>
    <scope>FUNCTION</scope>
</reference>
<reference key="5">
    <citation type="journal article" date="2003" name="Microbiology">
        <title>Application of a bacterial two-hybrid system for the analysis of protein-protein interactions between femABX family proteins.</title>
        <authorList>
            <person name="Rohrer S."/>
            <person name="Berger-Baechi B."/>
        </authorList>
    </citation>
    <scope>SUBUNIT</scope>
    <scope>INTERACTION WITH FEMB</scope>
</reference>
<reference key="6">
    <citation type="journal article" date="2004" name="Mol. Microbiol.">
        <title>In vitro assembly of a complete, pentaglycine interpeptide bridge containing cell wall precursor (lipid II-Gly5) of Staphylococcus aureus.</title>
        <authorList>
            <person name="Schneider T."/>
            <person name="Senn M.M."/>
            <person name="Berger-Baechi B."/>
            <person name="Tossi A."/>
            <person name="Sahl H.-G."/>
            <person name="Wiedemann I."/>
        </authorList>
    </citation>
    <scope>FUNCTION</scope>
    <scope>CATALYTIC ACTIVITY</scope>
</reference>
<accession>Q2FYR2</accession>
<proteinExistence type="evidence at protein level"/>
<comment type="function">
    <text evidence="1 3 4">Catalyzes the formation of the pentaglycine interpeptide bridge, which is characteristic of the S.aureus peptidoglycan. Adds glycines 2 and 3 of the pentaglycine bridge, using glycyl-tRNA(Gly) as donor. Involved in resistance to methicillin.</text>
</comment>
<comment type="catalytic activity">
    <reaction evidence="1">
        <text>beta-D-GlcNAc-(1-&gt;4)-Mur2Ac(oyl-L-Ala-D-isoglutaminyl-L-Lys-(N(6)-Gly)-D-Ala-D-Ala)-di-trans,octa-cis-undecaprenyl diphosphate + 2 glycyl-tRNA(Gly) = MurNAc-L-Ala-D-isoglutaminyl-L-Lys-(N(6)-tri-Gly)-D-Ala-D-Ala-diphospho-di-trans,octa-cis-undecaprenyl-GlcNAc + 2 tRNA(Gly) + 2 H(+)</text>
        <dbReference type="Rhea" id="RHEA:30439"/>
        <dbReference type="Rhea" id="RHEA-COMP:9664"/>
        <dbReference type="Rhea" id="RHEA-COMP:9683"/>
        <dbReference type="ChEBI" id="CHEBI:15378"/>
        <dbReference type="ChEBI" id="CHEBI:62234"/>
        <dbReference type="ChEBI" id="CHEBI:62235"/>
        <dbReference type="ChEBI" id="CHEBI:78442"/>
        <dbReference type="ChEBI" id="CHEBI:78522"/>
        <dbReference type="EC" id="2.3.2.17"/>
    </reaction>
</comment>
<comment type="subunit">
    <text evidence="6">Homodimer. Interacts with FemB (Probable).</text>
</comment>
<comment type="subcellular location">
    <subcellularLocation>
        <location evidence="2">Cytoplasm</location>
    </subcellularLocation>
</comment>
<comment type="miscellaneous">
    <text>Since cross-linking between the peptide strands is critical for maintaining stability of the cell wall, FemA is a potential target for the development of new antibacterial agents.</text>
</comment>
<comment type="similarity">
    <text evidence="5">Belongs to the FemABX family.</text>
</comment>
<protein>
    <recommendedName>
        <fullName>Aminoacyltransferase FemA</fullName>
        <ecNumber>2.3.2.17</ecNumber>
    </recommendedName>
    <alternativeName>
        <fullName>Factor essential for expression of methicillin resistance A</fullName>
    </alternativeName>
    <alternativeName>
        <fullName>N-acetylmuramoyl-L-alanyl-D-glutamyl-L-lysyl-(N6-glycyl)-D-alanyl-D-alanine-diphosphoundecaprenyl-N-acetylglucosamine:glycine glycyltransferase</fullName>
    </alternativeName>
</protein>
<keyword id="KW-0012">Acyltransferase</keyword>
<keyword id="KW-0046">Antibiotic resistance</keyword>
<keyword id="KW-0133">Cell shape</keyword>
<keyword id="KW-0961">Cell wall biogenesis/degradation</keyword>
<keyword id="KW-0963">Cytoplasm</keyword>
<keyword id="KW-0903">Direct protein sequencing</keyword>
<keyword id="KW-0573">Peptidoglycan synthesis</keyword>
<keyword id="KW-1185">Reference proteome</keyword>
<keyword id="KW-0808">Transferase</keyword>
<name>FEMA_STAA8</name>
<organism>
    <name type="scientific">Staphylococcus aureus (strain NCTC 8325 / PS 47)</name>
    <dbReference type="NCBI Taxonomy" id="93061"/>
    <lineage>
        <taxon>Bacteria</taxon>
        <taxon>Bacillati</taxon>
        <taxon>Bacillota</taxon>
        <taxon>Bacilli</taxon>
        <taxon>Bacillales</taxon>
        <taxon>Staphylococcaceae</taxon>
        <taxon>Staphylococcus</taxon>
    </lineage>
</organism>
<evidence type="ECO:0000269" key="1">
    <source>
    </source>
</evidence>
<evidence type="ECO:0000269" key="2">
    <source>
    </source>
</evidence>
<evidence type="ECO:0000269" key="3">
    <source>
    </source>
</evidence>
<evidence type="ECO:0000269" key="4">
    <source>
    </source>
</evidence>
<evidence type="ECO:0000305" key="5"/>
<evidence type="ECO:0000305" key="6">
    <source>
    </source>
</evidence>
<feature type="chain" id="PRO_0000247017" description="Aminoacyltransferase FemA">
    <location>
        <begin position="1"/>
        <end position="420"/>
    </location>
</feature>
<gene>
    <name type="primary">femA</name>
    <name type="ordered locus">SAOUHSC_01373</name>
</gene>